<name>LYS7_CAEEL</name>
<dbReference type="EMBL" id="BX284605">
    <property type="protein sequence ID" value="CCD62480.1"/>
    <property type="molecule type" value="Genomic_DNA"/>
</dbReference>
<dbReference type="PIR" id="T03857">
    <property type="entry name" value="T03857"/>
</dbReference>
<dbReference type="RefSeq" id="NP_503972.1">
    <property type="nucleotide sequence ID" value="NM_071571.9"/>
</dbReference>
<dbReference type="SMR" id="O16202"/>
<dbReference type="FunCoup" id="O16202">
    <property type="interactions" value="1"/>
</dbReference>
<dbReference type="STRING" id="6239.C02A12.4.1"/>
<dbReference type="PaxDb" id="6239-C02A12.4"/>
<dbReference type="PeptideAtlas" id="O16202"/>
<dbReference type="EnsemblMetazoa" id="C02A12.4.1">
    <property type="protein sequence ID" value="C02A12.4.1"/>
    <property type="gene ID" value="WBGene00003096"/>
</dbReference>
<dbReference type="GeneID" id="178772"/>
<dbReference type="KEGG" id="cel:CELE_C02A12.4"/>
<dbReference type="UCSC" id="C02A12.4.1">
    <property type="organism name" value="c. elegans"/>
</dbReference>
<dbReference type="AGR" id="WB:WBGene00003096"/>
<dbReference type="CTD" id="178772"/>
<dbReference type="WormBase" id="C02A12.4">
    <property type="protein sequence ID" value="CE07828"/>
    <property type="gene ID" value="WBGene00003096"/>
    <property type="gene designation" value="lys-7"/>
</dbReference>
<dbReference type="eggNOG" id="ENOG502S5RB">
    <property type="taxonomic scope" value="Eukaryota"/>
</dbReference>
<dbReference type="GeneTree" id="ENSGT00970000195882"/>
<dbReference type="HOGENOM" id="CLU_073372_1_0_1"/>
<dbReference type="InParanoid" id="O16202"/>
<dbReference type="OMA" id="TCIRINQ"/>
<dbReference type="OrthoDB" id="25039at2759"/>
<dbReference type="PhylomeDB" id="O16202"/>
<dbReference type="PRO" id="PR:O16202"/>
<dbReference type="Proteomes" id="UP000001940">
    <property type="component" value="Chromosome V"/>
</dbReference>
<dbReference type="Bgee" id="WBGene00003096">
    <property type="expression patterns" value="Expressed in adult organism and 2 other cell types or tissues"/>
</dbReference>
<dbReference type="GO" id="GO:0003796">
    <property type="term" value="F:lysozyme activity"/>
    <property type="evidence" value="ECO:0007669"/>
    <property type="project" value="InterPro"/>
</dbReference>
<dbReference type="GO" id="GO:0016998">
    <property type="term" value="P:cell wall macromolecule catabolic process"/>
    <property type="evidence" value="ECO:0007669"/>
    <property type="project" value="InterPro"/>
</dbReference>
<dbReference type="GO" id="GO:0050832">
    <property type="term" value="P:defense response to fungus"/>
    <property type="evidence" value="ECO:0000315"/>
    <property type="project" value="WormBase"/>
</dbReference>
<dbReference type="GO" id="GO:0050829">
    <property type="term" value="P:defense response to Gram-negative bacterium"/>
    <property type="evidence" value="ECO:0000315"/>
    <property type="project" value="WormBase"/>
</dbReference>
<dbReference type="GO" id="GO:0050830">
    <property type="term" value="P:defense response to Gram-positive bacterium"/>
    <property type="evidence" value="ECO:0000315"/>
    <property type="project" value="UniProtKB"/>
</dbReference>
<dbReference type="GO" id="GO:0045087">
    <property type="term" value="P:innate immune response"/>
    <property type="evidence" value="ECO:0000315"/>
    <property type="project" value="WormBase"/>
</dbReference>
<dbReference type="GO" id="GO:0009253">
    <property type="term" value="P:peptidoglycan catabolic process"/>
    <property type="evidence" value="ECO:0007669"/>
    <property type="project" value="InterPro"/>
</dbReference>
<dbReference type="GO" id="GO:0007165">
    <property type="term" value="P:signal transduction"/>
    <property type="evidence" value="ECO:0000318"/>
    <property type="project" value="GO_Central"/>
</dbReference>
<dbReference type="CDD" id="cd06416">
    <property type="entry name" value="GH25_Lys1-like"/>
    <property type="match status" value="1"/>
</dbReference>
<dbReference type="FunFam" id="3.20.20.80:FF:000129">
    <property type="entry name" value="Lysozyme-like protein 7"/>
    <property type="match status" value="1"/>
</dbReference>
<dbReference type="Gene3D" id="3.20.20.80">
    <property type="entry name" value="Glycosidases"/>
    <property type="match status" value="1"/>
</dbReference>
<dbReference type="InterPro" id="IPR051595">
    <property type="entry name" value="GH25_Enzymes"/>
</dbReference>
<dbReference type="InterPro" id="IPR002053">
    <property type="entry name" value="Glyco_hydro_25"/>
</dbReference>
<dbReference type="InterPro" id="IPR017853">
    <property type="entry name" value="Glycoside_hydrolase_SF"/>
</dbReference>
<dbReference type="PANTHER" id="PTHR23208:SF14">
    <property type="entry name" value="GLYCOSIDE HYDROLASE FAMILY 25 PROTEIN-RELATED"/>
    <property type="match status" value="1"/>
</dbReference>
<dbReference type="PANTHER" id="PTHR23208">
    <property type="entry name" value="LYSOZYME PROTEIN"/>
    <property type="match status" value="1"/>
</dbReference>
<dbReference type="SUPFAM" id="SSF51445">
    <property type="entry name" value="(Trans)glycosidases"/>
    <property type="match status" value="1"/>
</dbReference>
<dbReference type="PROSITE" id="PS51904">
    <property type="entry name" value="GLYCOSYL_HYDROL_F25_2"/>
    <property type="match status" value="1"/>
</dbReference>
<comment type="function">
    <text evidence="4 6 7 8">Plays a role in resistance to Gram-positive bacteria B.thuringiensis and M.nematophilum and Gram-negative bacteria S.boydii or S.flexneri infection and to fungus C.neoformans infection (PubMed:16809667, PubMed:21399680, PubMed:21931778, PubMed:22841995). Plays a role in susceptibility to Gram-negative bacterium S.typhimurium infection (PubMed:21399680).</text>
</comment>
<comment type="tissue specificity">
    <text evidence="3 5 9">Expressed in intestine (PubMed:12176330, PubMed:24972867). Expressed in rectal gland cells and head neurons (PubMed:17526726).</text>
</comment>
<comment type="induction">
    <text evidence="3 4 5 7 8 9">Induced by Gram-negative bacterium S.marcescens infection (PubMed:12176330). Induced by Gram-positive bacterium M.nematophilum infection (PubMed:16809667). Transiently induced by Gram-negative bacteria S.boydii and S.flexneri (PubMed:22841995). Down-regulated by exposure to Gram-positive bacterium B.thuringiensis spore toxins (PubMed:21931778). Down-regulated by exposure to Gram-negative bacteria S.marcescens or P.aeruginosa infection (PubMed:17526726). Down-regulated by Gram-positive bacterium S.aureus infection in the anterior part of the intestine (PubMed:24972867).</text>
</comment>
<comment type="disruption phenotype">
    <text evidence="4 6 7">Increased abl-1, fat-5, clec-60 and rga-6 mRNA levels (PubMed:21399680). Reduced survival in response to fungus C.neoformans infection (PubMed:21399680). Reduced survival in response to bacterium B.thuringiensis infection (PubMed:21931778). Increased survival in response to bacterium S.typhimurium infection (PubMed:21399680). Susceptibility to S.typhimurium infection is abolished in an abl-1 (ok171) mutant background (PubMed:21399680). Compared to wild-type, mutants grown in presence of bacterium M.nematophilum are more constipated, the tail swelling is increased, growth is slower and they are arrested at the L3 larval stage (PubMed:16809667). Survival rate is similar to wild-type in response to bacteria S.aureus or P.aruginosa infection (PubMed:21399680). In absence of infection, lifespan and brood size is similar to wild-type (PubMed:21399680).</text>
</comment>
<comment type="similarity">
    <text evidence="2 10">Belongs to the glycosyl hydrolase 25 family.</text>
</comment>
<comment type="caution">
    <text evidence="10">Lacks conserved active site residues, suggesting it has no catalytic activity.</text>
</comment>
<keyword id="KW-0929">Antimicrobial</keyword>
<keyword id="KW-0391">Immunity</keyword>
<keyword id="KW-0399">Innate immunity</keyword>
<keyword id="KW-1185">Reference proteome</keyword>
<keyword id="KW-0732">Signal</keyword>
<proteinExistence type="evidence at transcript level"/>
<evidence type="ECO:0000255" key="1"/>
<evidence type="ECO:0000255" key="2">
    <source>
        <dbReference type="PROSITE-ProRule" id="PRU01252"/>
    </source>
</evidence>
<evidence type="ECO:0000269" key="3">
    <source>
    </source>
</evidence>
<evidence type="ECO:0000269" key="4">
    <source>
    </source>
</evidence>
<evidence type="ECO:0000269" key="5">
    <source>
    </source>
</evidence>
<evidence type="ECO:0000269" key="6">
    <source>
    </source>
</evidence>
<evidence type="ECO:0000269" key="7">
    <source>
    </source>
</evidence>
<evidence type="ECO:0000269" key="8">
    <source>
    </source>
</evidence>
<evidence type="ECO:0000269" key="9">
    <source>
    </source>
</evidence>
<evidence type="ECO:0000305" key="10"/>
<evidence type="ECO:0000312" key="11">
    <source>
        <dbReference type="Proteomes" id="UP000001940"/>
    </source>
</evidence>
<evidence type="ECO:0000312" key="12">
    <source>
        <dbReference type="WormBase" id="C02A12.4"/>
    </source>
</evidence>
<accession>O16202</accession>
<gene>
    <name evidence="12" type="primary">lys-7</name>
    <name evidence="12" type="ORF">C02A12.4</name>
</gene>
<sequence length="283" mass="30880">MAHKSIVIFSVLAVLCHSASVKVPPIVDSSLPVKFSEVIAEPAPNVPSNLASYAYALDIYVQTTLSQLQCIKQAGYCAVFVRAYNPAGQGSFDTSSCVTIQNAYKAGLGIEIYMTPQPVSNKQGYQQLDEIIQGLTARAITVRAIWIQVTSPTNWPNNANSNINFINSIVSRARQSGLTVGIYTSYYDWNQITTGWSNIGNDVLLWYWNVYSGGVTGETPANFNDFRKFGCWTAPSVKQFAQDETVCGITVNRDVYLAGNVLKAVEEDGKIYAGGFVQGSLKI</sequence>
<reference evidence="11" key="1">
    <citation type="journal article" date="1998" name="Science">
        <title>Genome sequence of the nematode C. elegans: a platform for investigating biology.</title>
        <authorList>
            <consortium name="The C. elegans sequencing consortium"/>
        </authorList>
    </citation>
    <scope>NUCLEOTIDE SEQUENCE [LARGE SCALE GENOMIC DNA]</scope>
    <source>
        <strain evidence="11">Bristol N2</strain>
    </source>
</reference>
<reference evidence="10" key="2">
    <citation type="journal article" date="2002" name="Curr. Biol.">
        <title>Inducible antibacterial defense system in C. elegans.</title>
        <authorList>
            <person name="Mallo G.V."/>
            <person name="Kurz C.L."/>
            <person name="Couillault C."/>
            <person name="Pujol N."/>
            <person name="Granjeaud S."/>
            <person name="Kohara Y."/>
            <person name="Ewbank J.J."/>
        </authorList>
    </citation>
    <scope>TISSUE SPECIFICITY</scope>
    <scope>INDUCTION</scope>
</reference>
<reference evidence="10" key="3">
    <citation type="journal article" date="2006" name="Genome Res.">
        <title>Genomic clusters, putative pathogen recognition molecules, and antimicrobial genes are induced by infection of C. elegans with M. nematophilum.</title>
        <authorList>
            <person name="O'Rourke D."/>
            <person name="Baban D."/>
            <person name="Demidova M."/>
            <person name="Mott R."/>
            <person name="Hodgkin J."/>
        </authorList>
    </citation>
    <scope>FUNCTION</scope>
    <scope>INDUCTION</scope>
    <scope>DISRUPTION PHENOTYPE</scope>
</reference>
<reference evidence="10" key="4">
    <citation type="journal article" date="2007" name="Mol. Cell. Biol.">
        <title>Specificity and complexity of the Caenorhabditis elegans innate immune response.</title>
        <authorList>
            <person name="Alper S."/>
            <person name="McBride S.J."/>
            <person name="Lackford B."/>
            <person name="Freedman J.H."/>
            <person name="Schwartz D.A."/>
        </authorList>
    </citation>
    <scope>TISSUE SPECIFICITY</scope>
    <scope>INDUCTION</scope>
</reference>
<reference evidence="10" key="5">
    <citation type="journal article" date="2011" name="PLoS ONE">
        <title>A two-gene balance regulates Salmonella typhimurium tolerance in the nematode Caenorhabditis elegans.</title>
        <authorList>
            <person name="Marsh E.K."/>
            <person name="van den Berg M.C."/>
            <person name="May R.C."/>
        </authorList>
    </citation>
    <scope>FUNCTION</scope>
    <scope>DISRUPTION PHENOTYPE</scope>
</reference>
<reference evidence="10" key="6">
    <citation type="journal article" date="2011" name="PLoS ONE">
        <title>Protist-type lysozymes of the nematode Caenorhabditis elegans contribute to resistance against pathogenic Bacillus thuringiensis.</title>
        <authorList>
            <person name="Boehnisch C."/>
            <person name="Wong D."/>
            <person name="Habig M."/>
            <person name="Isermann K."/>
            <person name="Michiels N.K."/>
            <person name="Roeder T."/>
            <person name="May R.C."/>
            <person name="Schulenburg H."/>
        </authorList>
    </citation>
    <scope>FUNCTION</scope>
    <scope>INDUCTION</scope>
    <scope>DISRUPTION PHENOTYPE</scope>
</reference>
<reference evidence="10" key="7">
    <citation type="journal article" date="2012" name="Biochim. Biophys. Acta">
        <title>Studies on Shigella boydii infection in Caenorhabditis elegans and bioinformatics analysis of immune regulatory protein interactions.</title>
        <authorList>
            <person name="Kesika P."/>
            <person name="Balamurugan K."/>
        </authorList>
    </citation>
    <scope>FUNCTION</scope>
    <scope>INDUCTION</scope>
    <scope>DISRUPTION PHENOTYPE</scope>
</reference>
<reference evidence="10" key="8">
    <citation type="journal article" date="2014" name="Biol. Open">
        <title>Orthosiphon stamineus protects Caenorhabditis elegans against Staphylococcus aureus infection through immunomodulation.</title>
        <authorList>
            <person name="Kong C."/>
            <person name="Tan M.W."/>
            <person name="Nathan S."/>
        </authorList>
    </citation>
    <scope>TISSUE SPECIFICITY</scope>
    <scope>INDUCTION</scope>
</reference>
<protein>
    <recommendedName>
        <fullName evidence="10">Lysozyme-like protein 7</fullName>
    </recommendedName>
</protein>
<feature type="signal peptide" evidence="1">
    <location>
        <begin position="1"/>
        <end position="18"/>
    </location>
</feature>
<feature type="chain" id="PRO_5004157182" description="Lysozyme-like protein 7" evidence="1">
    <location>
        <begin position="19"/>
        <end position="283"/>
    </location>
</feature>
<feature type="domain" description="Ch-type lysozyme" evidence="2">
    <location>
        <begin position="53"/>
        <end position="273"/>
    </location>
</feature>
<organism evidence="11">
    <name type="scientific">Caenorhabditis elegans</name>
    <dbReference type="NCBI Taxonomy" id="6239"/>
    <lineage>
        <taxon>Eukaryota</taxon>
        <taxon>Metazoa</taxon>
        <taxon>Ecdysozoa</taxon>
        <taxon>Nematoda</taxon>
        <taxon>Chromadorea</taxon>
        <taxon>Rhabditida</taxon>
        <taxon>Rhabditina</taxon>
        <taxon>Rhabditomorpha</taxon>
        <taxon>Rhabditoidea</taxon>
        <taxon>Rhabditidae</taxon>
        <taxon>Peloderinae</taxon>
        <taxon>Caenorhabditis</taxon>
    </lineage>
</organism>